<accession>Q21836</accession>
<dbReference type="EMBL" id="BX284606">
    <property type="protein sequence ID" value="CAA92001.1"/>
    <property type="molecule type" value="Genomic_DNA"/>
</dbReference>
<dbReference type="PIR" id="T24046">
    <property type="entry name" value="T24046"/>
</dbReference>
<dbReference type="RefSeq" id="NP_509860.1">
    <property type="nucleotide sequence ID" value="NM_077459.6"/>
</dbReference>
<dbReference type="SMR" id="Q21836"/>
<dbReference type="FunCoup" id="Q21836">
    <property type="interactions" value="142"/>
</dbReference>
<dbReference type="STRING" id="6239.R08B4.2.1"/>
<dbReference type="PaxDb" id="6239-R08B4.2"/>
<dbReference type="EnsemblMetazoa" id="R08B4.2.1">
    <property type="protein sequence ID" value="R08B4.2.1"/>
    <property type="gene ID" value="WBGene00044330"/>
</dbReference>
<dbReference type="GeneID" id="181302"/>
<dbReference type="KEGG" id="cel:CELE_R08B4.2"/>
<dbReference type="UCSC" id="R08B4.2">
    <property type="organism name" value="c. elegans"/>
</dbReference>
<dbReference type="AGR" id="WB:WBGene00044330"/>
<dbReference type="CTD" id="181302"/>
<dbReference type="WormBase" id="R08B4.2">
    <property type="protein sequence ID" value="CE03536"/>
    <property type="gene ID" value="WBGene00044330"/>
    <property type="gene designation" value="alr-1"/>
</dbReference>
<dbReference type="eggNOG" id="KOG0490">
    <property type="taxonomic scope" value="Eukaryota"/>
</dbReference>
<dbReference type="GeneTree" id="ENSGT00940000165209"/>
<dbReference type="HOGENOM" id="CLU_767760_0_0_1"/>
<dbReference type="InParanoid" id="Q21836"/>
<dbReference type="OMA" id="DNPYQMM"/>
<dbReference type="OrthoDB" id="6159439at2759"/>
<dbReference type="PRO" id="PR:Q21836"/>
<dbReference type="Proteomes" id="UP000001940">
    <property type="component" value="Chromosome X"/>
</dbReference>
<dbReference type="Bgee" id="WBGene00044330">
    <property type="expression patterns" value="Expressed in pharyngeal muscle cell (C elegans) and 3 other cell types or tissues"/>
</dbReference>
<dbReference type="GO" id="GO:0005634">
    <property type="term" value="C:nucleus"/>
    <property type="evidence" value="ECO:0000314"/>
    <property type="project" value="WormBase"/>
</dbReference>
<dbReference type="GO" id="GO:0000981">
    <property type="term" value="F:DNA-binding transcription factor activity, RNA polymerase II-specific"/>
    <property type="evidence" value="ECO:0000318"/>
    <property type="project" value="GO_Central"/>
</dbReference>
<dbReference type="GO" id="GO:0000977">
    <property type="term" value="F:RNA polymerase II transcription regulatory region sequence-specific DNA binding"/>
    <property type="evidence" value="ECO:0000314"/>
    <property type="project" value="WormBase"/>
</dbReference>
<dbReference type="GO" id="GO:0003386">
    <property type="term" value="P:amphid sensory organ development"/>
    <property type="evidence" value="ECO:0000315"/>
    <property type="project" value="UniProtKB"/>
</dbReference>
<dbReference type="GO" id="GO:0048730">
    <property type="term" value="P:epidermis morphogenesis"/>
    <property type="evidence" value="ECO:0000315"/>
    <property type="project" value="UniProtKB"/>
</dbReference>
<dbReference type="GO" id="GO:0048666">
    <property type="term" value="P:neuron development"/>
    <property type="evidence" value="ECO:0000315"/>
    <property type="project" value="UniProtKB"/>
</dbReference>
<dbReference type="GO" id="GO:0045944">
    <property type="term" value="P:positive regulation of transcription by RNA polymerase II"/>
    <property type="evidence" value="ECO:0000315"/>
    <property type="project" value="UniProtKB"/>
</dbReference>
<dbReference type="GO" id="GO:0008360">
    <property type="term" value="P:regulation of cell shape"/>
    <property type="evidence" value="ECO:0000315"/>
    <property type="project" value="UniProtKB"/>
</dbReference>
<dbReference type="GO" id="GO:0006357">
    <property type="term" value="P:regulation of transcription by RNA polymerase II"/>
    <property type="evidence" value="ECO:0000318"/>
    <property type="project" value="GO_Central"/>
</dbReference>
<dbReference type="GO" id="GO:0050975">
    <property type="term" value="P:sensory perception of touch"/>
    <property type="evidence" value="ECO:0000315"/>
    <property type="project" value="UniProtKB"/>
</dbReference>
<dbReference type="CDD" id="cd00086">
    <property type="entry name" value="homeodomain"/>
    <property type="match status" value="1"/>
</dbReference>
<dbReference type="FunFam" id="1.10.10.60:FF:000679">
    <property type="entry name" value="Homeobox protein aristaless"/>
    <property type="match status" value="1"/>
</dbReference>
<dbReference type="Gene3D" id="1.10.10.60">
    <property type="entry name" value="Homeodomain-like"/>
    <property type="match status" value="1"/>
</dbReference>
<dbReference type="InterPro" id="IPR001356">
    <property type="entry name" value="HD"/>
</dbReference>
<dbReference type="InterPro" id="IPR017970">
    <property type="entry name" value="Homeobox_CS"/>
</dbReference>
<dbReference type="InterPro" id="IPR009057">
    <property type="entry name" value="Homeodomain-like_sf"/>
</dbReference>
<dbReference type="InterPro" id="IPR050649">
    <property type="entry name" value="Paired_Homeobox_TFs"/>
</dbReference>
<dbReference type="PANTHER" id="PTHR24329:SF543">
    <property type="entry name" value="FI01017P-RELATED"/>
    <property type="match status" value="1"/>
</dbReference>
<dbReference type="PANTHER" id="PTHR24329">
    <property type="entry name" value="HOMEOBOX PROTEIN ARISTALESS"/>
    <property type="match status" value="1"/>
</dbReference>
<dbReference type="Pfam" id="PF00046">
    <property type="entry name" value="Homeodomain"/>
    <property type="match status" value="1"/>
</dbReference>
<dbReference type="SMART" id="SM00389">
    <property type="entry name" value="HOX"/>
    <property type="match status" value="1"/>
</dbReference>
<dbReference type="SUPFAM" id="SSF46689">
    <property type="entry name" value="Homeodomain-like"/>
    <property type="match status" value="1"/>
</dbReference>
<dbReference type="PROSITE" id="PS00027">
    <property type="entry name" value="HOMEOBOX_1"/>
    <property type="match status" value="1"/>
</dbReference>
<dbReference type="PROSITE" id="PS50071">
    <property type="entry name" value="HOMEOBOX_2"/>
    <property type="match status" value="1"/>
</dbReference>
<comment type="function">
    <text evidence="1 4 5 6 7">Transcription factor (By similarity). Involved in activating or repressing transcription of genes in neurons (PubMed:15790968, PubMed:21368126). Regulates expression of nuclear hormone receptor odr-7 and LIM homeodomain protein lin-11 in AWA and ASG chemosensory neurons (PubMed:15790968, PubMed:21368126). In concert with lin-11 and forkhead domain protein unc-130 plays a role in specifying AWA and ASG cell fates (PubMed:15790968). Plays a role in modulating dendritic morphology and functions of AWA neurons (PubMed:15790968). Involved in regulating GABAergic motor neuron development, acting in parallel with nuclear hormone receptor unc-55 (PubMed:15790968, PubMed:31691806). Required to maintain the functional and structural integrity of the amphid organs during larval development (PubMed:16055504). Plays a role in anterior hypodermal morphogenesis (PubMed:16055504). Required for touch sensation (PubMed:21368126, PubMed:31691806). May act as a transcriptional activator in touch receptor neurons (TRNs), forming a positive feedback loop with transcription factor mec-3, thereby restricting the variability of expression of target genes such as mec-3 (PubMed:21368126). Positively modulates expression of H3K4 demethylase rbr-2 in early embryogenesis and during larval development (PubMed:31691806).</text>
</comment>
<comment type="subcellular location">
    <subcellularLocation>
        <location evidence="4">Nucleus</location>
    </subcellularLocation>
</comment>
<comment type="developmental stage">
    <text evidence="4">Earliest expression in 1.5-fold embryos, and then at later embryonic stages in neuronal and non-neuronal cells (at protein level) (PubMed:15790968). Expressed in larvae and adults in multiple neuronal and nonneuronal cells, including epidermal cells, in the head, neuronal cells in the tail and in the GABAergic DD and VD motoneurons (MNs) in the ventral nerve cord (at protein level) (PubMed:15790968). Expressed in 24 of 26 GABAergic neurons, including the 13 VD and 6 DD, and the RME L/R, AVL, RIS and DVB neurons throughout postembryonic development (PubMed:15790968).</text>
</comment>
<evidence type="ECO:0000250" key="1">
    <source>
        <dbReference type="UniProtKB" id="Q96QS3"/>
    </source>
</evidence>
<evidence type="ECO:0000255" key="2">
    <source>
        <dbReference type="PROSITE-ProRule" id="PRU00108"/>
    </source>
</evidence>
<evidence type="ECO:0000256" key="3">
    <source>
        <dbReference type="SAM" id="MobiDB-lite"/>
    </source>
</evidence>
<evidence type="ECO:0000269" key="4">
    <source>
    </source>
</evidence>
<evidence type="ECO:0000269" key="5">
    <source>
    </source>
</evidence>
<evidence type="ECO:0000269" key="6">
    <source>
    </source>
</evidence>
<evidence type="ECO:0000269" key="7">
    <source>
    </source>
</evidence>
<evidence type="ECO:0000305" key="8"/>
<evidence type="ECO:0000312" key="9">
    <source>
        <dbReference type="Proteomes" id="UP000001940"/>
    </source>
</evidence>
<evidence type="ECO:0000312" key="10">
    <source>
        <dbReference type="WormBase" id="R08B4.2"/>
    </source>
</evidence>
<name>ARXH_CAEEL</name>
<gene>
    <name evidence="10" type="primary">alr-1</name>
    <name evidence="10" type="ORF">R08B4.2</name>
</gene>
<protein>
    <recommendedName>
        <fullName evidence="1">Homeobox ARX homolog alr-1</fullName>
    </recommendedName>
    <alternativeName>
        <fullName evidence="10">Aristaless-related homeobox alr-1</fullName>
    </alternativeName>
</protein>
<reference evidence="9" key="1">
    <citation type="journal article" date="1998" name="Science">
        <title>Genome sequence of the nematode C. elegans: a platform for investigating biology.</title>
        <authorList>
            <consortium name="The C. elegans sequencing consortium"/>
        </authorList>
    </citation>
    <scope>NUCLEOTIDE SEQUENCE [LARGE SCALE GENOMIC DNA]</scope>
    <source>
        <strain evidence="9">Bristol N2</strain>
    </source>
</reference>
<reference evidence="8" key="2">
    <citation type="journal article" date="2005" name="Development">
        <title>Regulation of chemosensory and GABAergic motor neuron development by the C. elegans Aristaless/Arx homolog alr-1.</title>
        <authorList>
            <person name="Melkman T."/>
            <person name="Sengupta P."/>
        </authorList>
    </citation>
    <scope>FUNCTION</scope>
    <scope>SUBCELLULAR LOCATION</scope>
    <scope>DEVELOPMENTAL STAGE</scope>
</reference>
<reference evidence="8" key="3">
    <citation type="journal article" date="2005" name="Mol. Biol. Cell">
        <title>The Caenorhabditis elegans aristaless orthologue, alr-1, is required for maintaining the functional and structural integrity of the amphid sensory organs.</title>
        <authorList>
            <person name="Tucker M."/>
            <person name="Sieber M."/>
            <person name="Morphew M."/>
            <person name="Han M."/>
        </authorList>
    </citation>
    <scope>FUNCTION</scope>
</reference>
<reference evidence="8" key="4">
    <citation type="journal article" date="2011" name="Proc. Natl. Acad. Sci. U.S.A.">
        <title>Caenorhabditis elegans aristaless/Arx gene alr-1 restricts variable gene expression.</title>
        <authorList>
            <person name="Topalidou I."/>
            <person name="van Oudenaarden A."/>
            <person name="Chalfie M."/>
        </authorList>
    </citation>
    <scope>FUNCTION</scope>
</reference>
<reference key="5">
    <citation type="journal article" date="2019" name="Hum. Mol. Genet.">
        <title>Histone demethylase KDM5C is a SAHA-sensitive central hub at the crossroads of transcriptional axes involved in multiple neurodevelopmental disorders.</title>
        <authorList>
            <person name="Poeta L."/>
            <person name="Padula A."/>
            <person name="Attianese B."/>
            <person name="Valentino M."/>
            <person name="Verrillo L."/>
            <person name="Filosa S."/>
            <person name="Shoubridge C."/>
            <person name="Barra A."/>
            <person name="Schwartz C.E."/>
            <person name="Christensen J."/>
            <person name="van Bokhoven H."/>
            <person name="Helin K."/>
            <person name="Lioi M.B."/>
            <person name="Collombat P."/>
            <person name="Gecz J."/>
            <person name="Altucci L."/>
            <person name="Di Schiavi E."/>
            <person name="Miano M.G."/>
        </authorList>
    </citation>
    <scope>FUNCTION</scope>
</reference>
<feature type="chain" id="PRO_0000456894" description="Homeobox ARX homolog alr-1">
    <location>
        <begin position="1"/>
        <end position="362"/>
    </location>
</feature>
<feature type="DNA-binding region" description="Homeobox" evidence="2">
    <location>
        <begin position="117"/>
        <end position="176"/>
    </location>
</feature>
<feature type="region of interest" description="Disordered" evidence="3">
    <location>
        <begin position="1"/>
        <end position="34"/>
    </location>
</feature>
<feature type="region of interest" description="Disordered" evidence="3">
    <location>
        <begin position="92"/>
        <end position="118"/>
    </location>
</feature>
<feature type="region of interest" description="Disordered" evidence="3">
    <location>
        <begin position="174"/>
        <end position="193"/>
    </location>
</feature>
<feature type="region of interest" description="Disordered" evidence="3">
    <location>
        <begin position="313"/>
        <end position="362"/>
    </location>
</feature>
<feature type="compositionally biased region" description="Basic and acidic residues" evidence="3">
    <location>
        <begin position="1"/>
        <end position="17"/>
    </location>
</feature>
<feature type="compositionally biased region" description="Polar residues" evidence="3">
    <location>
        <begin position="99"/>
        <end position="110"/>
    </location>
</feature>
<feature type="compositionally biased region" description="Low complexity" evidence="3">
    <location>
        <begin position="322"/>
        <end position="343"/>
    </location>
</feature>
<organism evidence="9">
    <name type="scientific">Caenorhabditis elegans</name>
    <dbReference type="NCBI Taxonomy" id="6239"/>
    <lineage>
        <taxon>Eukaryota</taxon>
        <taxon>Metazoa</taxon>
        <taxon>Ecdysozoa</taxon>
        <taxon>Nematoda</taxon>
        <taxon>Chromadorea</taxon>
        <taxon>Rhabditida</taxon>
        <taxon>Rhabditina</taxon>
        <taxon>Rhabditomorpha</taxon>
        <taxon>Rhabditoidea</taxon>
        <taxon>Rhabditidae</taxon>
        <taxon>Peloderinae</taxon>
        <taxon>Caenorhabditis</taxon>
    </lineage>
</organism>
<proteinExistence type="evidence at protein level"/>
<sequence>MPELKKEDSSKDEKDLDMNCPPLHRPNGADLNQYSKSLMEQLQAQLFANPALQFPSFPPAFSIAALTNNQHELKEDDGKKTPTGDNILEAASVLDNRENGSPSDGTNSPDDNGKRKQRRYRTTFSAFQLDELEKVFARTHYPDVFTREELATRVQLTEARVQVWFQNRRAKYRKQERSSTHHPYQAPMSIPNSNGDNPYQMMLSQEAIFAAINQQAAAHLLNEQVRIATSDRRSQSPSVPVTTSSPILPTSVTPTFQNADALNMLFGGITPVTQQLLYVQQFSRAMDAFRTQLLGSVPAGATAEVTDVVALKTEDSKSNSRAGSSSPTPTESSGAAATSTSPTNFADMNSLISDVKPKEESS</sequence>
<keyword id="KW-0238">DNA-binding</keyword>
<keyword id="KW-0371">Homeobox</keyword>
<keyword id="KW-0539">Nucleus</keyword>
<keyword id="KW-1185">Reference proteome</keyword>
<keyword id="KW-0804">Transcription</keyword>
<keyword id="KW-0805">Transcription regulation</keyword>